<sequence length="291" mass="31667">MIQVAGVNFEDPIVIASGIVPPTKEYMQNVCEKYEPSAITSKTLTYSPLEPHRSPTFVKISDNCYLNAIGLGNPGIQILRDLGEIKCKLIISIGGSNVNEYIDAVSKINDIPVMIELNVSSPNRRGFGESNLTYVEEIVKNVKSIVKKPVFVKLGPWDNIVEIAGRALSAGADGLTLINTLKGMLIDVEDFKPILSYGTGGISGKCIHALAVRVIHDVFKEYEPEIIGVGGVFDWRDAIELISVGAKLVGLGTVLVEKGFDVIREIREGIGTYLEEKGLKVEEIRGIGVKR</sequence>
<reference key="1">
    <citation type="submission" date="1997-04" db="EMBL/GenBank/DDBJ databases">
        <authorList>
            <person name="Charlier D.R.M."/>
            <person name="Thia-Toong T.-L."/>
            <person name="Roovers M."/>
            <person name="Durbecq V."/>
            <person name="Legrain C."/>
            <person name="Glansdorff N."/>
        </authorList>
    </citation>
    <scope>NUCLEOTIDE SEQUENCE [GENOMIC DNA]</scope>
    <source>
        <strain>ATCC 33909 / DSM 639 / JCM 8929 / NBRC 15157 / NCIMB 11770</strain>
    </source>
</reference>
<reference key="2">
    <citation type="journal article" date="2002" name="J. Bacteriol.">
        <title>Genes of de novo pyrimidine biosynthesis from the hyperthermoacidophilic crenarchaeote Sulfolobus acidocaldarius: novel organization in a bipolar operon.</title>
        <authorList>
            <person name="Thia-Toong T.-L."/>
            <person name="Roovers M."/>
            <person name="Durbecq V."/>
            <person name="Gigot D."/>
            <person name="Glansdorff N."/>
            <person name="Charlier D.R.M."/>
        </authorList>
    </citation>
    <scope>NUCLEOTIDE SEQUENCE [GENOMIC DNA]</scope>
    <source>
        <strain>ATCC 33909 / DSM 639 / JCM 8929 / NBRC 15157 / NCIMB 11770</strain>
    </source>
</reference>
<reference key="3">
    <citation type="journal article" date="2005" name="J. Bacteriol.">
        <title>The genome of Sulfolobus acidocaldarius, a model organism of the Crenarchaeota.</title>
        <authorList>
            <person name="Chen L."/>
            <person name="Bruegger K."/>
            <person name="Skovgaard M."/>
            <person name="Redder P."/>
            <person name="She Q."/>
            <person name="Torarinsson E."/>
            <person name="Greve B."/>
            <person name="Awayez M."/>
            <person name="Zibat A."/>
            <person name="Klenk H.-P."/>
            <person name="Garrett R.A."/>
        </authorList>
    </citation>
    <scope>NUCLEOTIDE SEQUENCE [LARGE SCALE GENOMIC DNA]</scope>
    <source>
        <strain>ATCC 33909 / DSM 639 / JCM 8929 / NBRC 15157 / NCIMB 11770</strain>
    </source>
</reference>
<evidence type="ECO:0000250" key="1"/>
<evidence type="ECO:0000305" key="2"/>
<accession>O08358</accession>
<accession>Q4J8H5</accession>
<feature type="chain" id="PRO_0000148416" description="Dihydroorotate dehydrogenase B (NAD(+)), catalytic subunit">
    <location>
        <begin position="1"/>
        <end position="291"/>
    </location>
</feature>
<feature type="active site" description="Nucleophile">
    <location>
        <position position="121"/>
    </location>
</feature>
<feature type="binding site" evidence="1">
    <location>
        <position position="17"/>
    </location>
    <ligand>
        <name>FMN</name>
        <dbReference type="ChEBI" id="CHEBI:58210"/>
    </ligand>
</feature>
<feature type="binding site" evidence="1">
    <location>
        <begin position="42"/>
        <end position="43"/>
    </location>
    <ligand>
        <name>FMN</name>
        <dbReference type="ChEBI" id="CHEBI:58210"/>
    </ligand>
</feature>
<feature type="binding site" evidence="1">
    <location>
        <position position="42"/>
    </location>
    <ligand>
        <name>substrate</name>
    </ligand>
</feature>
<feature type="binding site" evidence="1">
    <location>
        <begin position="67"/>
        <end position="71"/>
    </location>
    <ligand>
        <name>substrate</name>
    </ligand>
</feature>
<feature type="binding site" evidence="1">
    <location>
        <position position="118"/>
    </location>
    <ligand>
        <name>FMN</name>
        <dbReference type="ChEBI" id="CHEBI:58210"/>
    </ligand>
</feature>
<feature type="binding site" evidence="1">
    <location>
        <position position="118"/>
    </location>
    <ligand>
        <name>substrate</name>
    </ligand>
</feature>
<feature type="binding site" evidence="1">
    <location>
        <position position="153"/>
    </location>
    <ligand>
        <name>FMN</name>
        <dbReference type="ChEBI" id="CHEBI:58210"/>
    </ligand>
</feature>
<feature type="binding site" evidence="1">
    <location>
        <position position="178"/>
    </location>
    <ligand>
        <name>FMN</name>
        <dbReference type="ChEBI" id="CHEBI:58210"/>
    </ligand>
</feature>
<feature type="binding site" evidence="1">
    <location>
        <begin position="179"/>
        <end position="180"/>
    </location>
    <ligand>
        <name>substrate</name>
    </ligand>
</feature>
<feature type="binding site" evidence="1">
    <location>
        <position position="204"/>
    </location>
    <ligand>
        <name>FMN</name>
        <dbReference type="ChEBI" id="CHEBI:58210"/>
    </ligand>
</feature>
<feature type="binding site" evidence="1">
    <location>
        <begin position="230"/>
        <end position="231"/>
    </location>
    <ligand>
        <name>FMN</name>
        <dbReference type="ChEBI" id="CHEBI:58210"/>
    </ligand>
</feature>
<feature type="binding site" evidence="1">
    <location>
        <begin position="252"/>
        <end position="253"/>
    </location>
    <ligand>
        <name>FMN</name>
        <dbReference type="ChEBI" id="CHEBI:58210"/>
    </ligand>
</feature>
<comment type="function">
    <text evidence="1">Catalyzes the conversion of dihydroorotate to orotate with NAD(+) as electron acceptor.</text>
</comment>
<comment type="catalytic activity">
    <reaction>
        <text>(S)-dihydroorotate + NAD(+) = orotate + NADH + H(+)</text>
        <dbReference type="Rhea" id="RHEA:13513"/>
        <dbReference type="ChEBI" id="CHEBI:15378"/>
        <dbReference type="ChEBI" id="CHEBI:30839"/>
        <dbReference type="ChEBI" id="CHEBI:30864"/>
        <dbReference type="ChEBI" id="CHEBI:57540"/>
        <dbReference type="ChEBI" id="CHEBI:57945"/>
        <dbReference type="EC" id="1.3.1.14"/>
    </reaction>
</comment>
<comment type="cofactor">
    <cofactor evidence="1">
        <name>FMN</name>
        <dbReference type="ChEBI" id="CHEBI:58210"/>
    </cofactor>
    <text evidence="1">Binds 1 FMN per subunit.</text>
</comment>
<comment type="pathway">
    <text>Pyrimidine metabolism; UMP biosynthesis via de novo pathway; orotate from (S)-dihydroorotate (NAD(+) route): step 1/1.</text>
</comment>
<comment type="subunit">
    <text evidence="1">Heterotetramer of 2 PyrK and 2 PyrD type B subunits.</text>
</comment>
<comment type="subcellular location">
    <subcellularLocation>
        <location evidence="1">Cytoplasm</location>
    </subcellularLocation>
</comment>
<comment type="similarity">
    <text evidence="2">Belongs to the dihydroorotate dehydrogenase family. Type 1 subfamily.</text>
</comment>
<comment type="sequence caution" evidence="2">
    <conflict type="erroneous initiation">
        <sequence resource="EMBL-CDS" id="CAA73354"/>
    </conflict>
</comment>
<protein>
    <recommendedName>
        <fullName>Dihydroorotate dehydrogenase B (NAD(+)), catalytic subunit</fullName>
        <shortName>DHOD B</shortName>
        <shortName>DHODase B</shortName>
        <shortName>DHOdehase B</shortName>
        <ecNumber>1.3.1.14</ecNumber>
    </recommendedName>
    <alternativeName>
        <fullName>Dihydroorotate oxidase B</fullName>
    </alternativeName>
    <alternativeName>
        <fullName>Orotate reductase (NADH)</fullName>
    </alternativeName>
</protein>
<proteinExistence type="inferred from homology"/>
<gene>
    <name type="primary">pyrD</name>
    <name type="ordered locus">Saci_1592</name>
</gene>
<keyword id="KW-0963">Cytoplasm</keyword>
<keyword id="KW-0285">Flavoprotein</keyword>
<keyword id="KW-0288">FMN</keyword>
<keyword id="KW-0520">NAD</keyword>
<keyword id="KW-0560">Oxidoreductase</keyword>
<keyword id="KW-0665">Pyrimidine biosynthesis</keyword>
<keyword id="KW-1185">Reference proteome</keyword>
<organism>
    <name type="scientific">Sulfolobus acidocaldarius (strain ATCC 33909 / DSM 639 / JCM 8929 / NBRC 15157 / NCIMB 11770)</name>
    <dbReference type="NCBI Taxonomy" id="330779"/>
    <lineage>
        <taxon>Archaea</taxon>
        <taxon>Thermoproteota</taxon>
        <taxon>Thermoprotei</taxon>
        <taxon>Sulfolobales</taxon>
        <taxon>Sulfolobaceae</taxon>
        <taxon>Sulfolobus</taxon>
    </lineage>
</organism>
<name>PYRDB_SULAC</name>
<dbReference type="EC" id="1.3.1.14"/>
<dbReference type="EMBL" id="Y12823">
    <property type="protein sequence ID" value="CAA73354.1"/>
    <property type="status" value="ALT_INIT"/>
    <property type="molecule type" value="Genomic_DNA"/>
</dbReference>
<dbReference type="EMBL" id="AJ459777">
    <property type="protein sequence ID" value="CAD31980.1"/>
    <property type="molecule type" value="Genomic_DNA"/>
</dbReference>
<dbReference type="EMBL" id="CP000077">
    <property type="protein sequence ID" value="AAY80905.1"/>
    <property type="molecule type" value="Genomic_DNA"/>
</dbReference>
<dbReference type="RefSeq" id="WP_011278407.1">
    <property type="nucleotide sequence ID" value="NC_007181.1"/>
</dbReference>
<dbReference type="SMR" id="O08358"/>
<dbReference type="STRING" id="330779.Saci_1592"/>
<dbReference type="GeneID" id="14552085"/>
<dbReference type="GeneID" id="78441935"/>
<dbReference type="KEGG" id="sai:Saci_1592"/>
<dbReference type="PATRIC" id="fig|330779.12.peg.1532"/>
<dbReference type="eggNOG" id="arCOG00603">
    <property type="taxonomic scope" value="Archaea"/>
</dbReference>
<dbReference type="HOGENOM" id="CLU_042042_0_1_2"/>
<dbReference type="UniPathway" id="UPA00070">
    <property type="reaction ID" value="UER00945"/>
</dbReference>
<dbReference type="Proteomes" id="UP000001018">
    <property type="component" value="Chromosome"/>
</dbReference>
<dbReference type="GO" id="GO:0005737">
    <property type="term" value="C:cytoplasm"/>
    <property type="evidence" value="ECO:0007669"/>
    <property type="project" value="UniProtKB-SubCell"/>
</dbReference>
<dbReference type="GO" id="GO:0004589">
    <property type="term" value="F:dihydroorotate dehydrogenase (NAD+) activity"/>
    <property type="evidence" value="ECO:0007669"/>
    <property type="project" value="UniProtKB-EC"/>
</dbReference>
<dbReference type="GO" id="GO:0006207">
    <property type="term" value="P:'de novo' pyrimidine nucleobase biosynthetic process"/>
    <property type="evidence" value="ECO:0007669"/>
    <property type="project" value="InterPro"/>
</dbReference>
<dbReference type="GO" id="GO:0044205">
    <property type="term" value="P:'de novo' UMP biosynthetic process"/>
    <property type="evidence" value="ECO:0007669"/>
    <property type="project" value="UniProtKB-UniRule"/>
</dbReference>
<dbReference type="CDD" id="cd04740">
    <property type="entry name" value="DHOD_1B_like"/>
    <property type="match status" value="1"/>
</dbReference>
<dbReference type="Gene3D" id="3.20.20.70">
    <property type="entry name" value="Aldolase class I"/>
    <property type="match status" value="1"/>
</dbReference>
<dbReference type="HAMAP" id="MF_00224">
    <property type="entry name" value="DHO_dh_type1"/>
    <property type="match status" value="1"/>
</dbReference>
<dbReference type="InterPro" id="IPR013785">
    <property type="entry name" value="Aldolase_TIM"/>
</dbReference>
<dbReference type="InterPro" id="IPR050074">
    <property type="entry name" value="DHO_dehydrogenase"/>
</dbReference>
<dbReference type="InterPro" id="IPR033888">
    <property type="entry name" value="DHOD_1B"/>
</dbReference>
<dbReference type="InterPro" id="IPR053488">
    <property type="entry name" value="DHODH_Type1"/>
</dbReference>
<dbReference type="InterPro" id="IPR024920">
    <property type="entry name" value="Dihydroorotate_DH_1"/>
</dbReference>
<dbReference type="InterPro" id="IPR012135">
    <property type="entry name" value="Dihydroorotate_DH_1_2"/>
</dbReference>
<dbReference type="InterPro" id="IPR005720">
    <property type="entry name" value="Dihydroorotate_DH_cat"/>
</dbReference>
<dbReference type="InterPro" id="IPR001295">
    <property type="entry name" value="Dihydroorotate_DH_CS"/>
</dbReference>
<dbReference type="NCBIfam" id="NF041011">
    <property type="entry name" value="dihydoor_dh_Arch"/>
    <property type="match status" value="1"/>
</dbReference>
<dbReference type="PANTHER" id="PTHR48109:SF1">
    <property type="entry name" value="DIHYDROOROTATE DEHYDROGENASE (FUMARATE)"/>
    <property type="match status" value="1"/>
</dbReference>
<dbReference type="PANTHER" id="PTHR48109">
    <property type="entry name" value="DIHYDROOROTATE DEHYDROGENASE (QUINONE), MITOCHONDRIAL-RELATED"/>
    <property type="match status" value="1"/>
</dbReference>
<dbReference type="Pfam" id="PF01180">
    <property type="entry name" value="DHO_dh"/>
    <property type="match status" value="1"/>
</dbReference>
<dbReference type="PIRSF" id="PIRSF000164">
    <property type="entry name" value="DHO_oxidase"/>
    <property type="match status" value="1"/>
</dbReference>
<dbReference type="SUPFAM" id="SSF51395">
    <property type="entry name" value="FMN-linked oxidoreductases"/>
    <property type="match status" value="1"/>
</dbReference>
<dbReference type="PROSITE" id="PS00912">
    <property type="entry name" value="DHODEHASE_2"/>
    <property type="match status" value="1"/>
</dbReference>